<accession>Q92SZ1</accession>
<keyword id="KW-0963">Cytoplasm</keyword>
<keyword id="KW-1185">Reference proteome</keyword>
<dbReference type="EMBL" id="AL591688">
    <property type="protein sequence ID" value="CAC41591.1"/>
    <property type="molecule type" value="Genomic_DNA"/>
</dbReference>
<dbReference type="RefSeq" id="NP_384310.1">
    <property type="nucleotide sequence ID" value="NC_003047.1"/>
</dbReference>
<dbReference type="RefSeq" id="WP_010968420.1">
    <property type="nucleotide sequence ID" value="NC_003047.1"/>
</dbReference>
<dbReference type="SMR" id="Q92SZ1"/>
<dbReference type="EnsemblBacteria" id="CAC41591">
    <property type="protein sequence ID" value="CAC41591"/>
    <property type="gene ID" value="SMc02879"/>
</dbReference>
<dbReference type="KEGG" id="sme:SMc02879"/>
<dbReference type="PATRIC" id="fig|266834.11.peg.1567"/>
<dbReference type="eggNOG" id="COG3142">
    <property type="taxonomic scope" value="Bacteria"/>
</dbReference>
<dbReference type="HOGENOM" id="CLU_050555_3_3_5"/>
<dbReference type="OrthoDB" id="9815677at2"/>
<dbReference type="Proteomes" id="UP000001976">
    <property type="component" value="Chromosome"/>
</dbReference>
<dbReference type="GO" id="GO:0005737">
    <property type="term" value="C:cytoplasm"/>
    <property type="evidence" value="ECO:0007669"/>
    <property type="project" value="UniProtKB-SubCell"/>
</dbReference>
<dbReference type="GO" id="GO:0005507">
    <property type="term" value="F:copper ion binding"/>
    <property type="evidence" value="ECO:0007669"/>
    <property type="project" value="TreeGrafter"/>
</dbReference>
<dbReference type="Gene3D" id="3.20.20.380">
    <property type="entry name" value="Copper homeostasis (CutC) domain"/>
    <property type="match status" value="1"/>
</dbReference>
<dbReference type="HAMAP" id="MF_00795">
    <property type="entry name" value="CutC"/>
    <property type="match status" value="1"/>
</dbReference>
<dbReference type="InterPro" id="IPR005627">
    <property type="entry name" value="CutC-like"/>
</dbReference>
<dbReference type="InterPro" id="IPR036822">
    <property type="entry name" value="CutC-like_dom_sf"/>
</dbReference>
<dbReference type="PANTHER" id="PTHR12598">
    <property type="entry name" value="COPPER HOMEOSTASIS PROTEIN CUTC"/>
    <property type="match status" value="1"/>
</dbReference>
<dbReference type="PANTHER" id="PTHR12598:SF0">
    <property type="entry name" value="COPPER HOMEOSTASIS PROTEIN CUTC HOMOLOG"/>
    <property type="match status" value="1"/>
</dbReference>
<dbReference type="Pfam" id="PF03932">
    <property type="entry name" value="CutC"/>
    <property type="match status" value="1"/>
</dbReference>
<dbReference type="SUPFAM" id="SSF110395">
    <property type="entry name" value="CutC-like"/>
    <property type="match status" value="1"/>
</dbReference>
<reference key="1">
    <citation type="journal article" date="2001" name="Proc. Natl. Acad. Sci. U.S.A.">
        <title>Analysis of the chromosome sequence of the legume symbiont Sinorhizobium meliloti strain 1021.</title>
        <authorList>
            <person name="Capela D."/>
            <person name="Barloy-Hubler F."/>
            <person name="Gouzy J."/>
            <person name="Bothe G."/>
            <person name="Ampe F."/>
            <person name="Batut J."/>
            <person name="Boistard P."/>
            <person name="Becker A."/>
            <person name="Boutry M."/>
            <person name="Cadieu E."/>
            <person name="Dreano S."/>
            <person name="Gloux S."/>
            <person name="Godrie T."/>
            <person name="Goffeau A."/>
            <person name="Kahn D."/>
            <person name="Kiss E."/>
            <person name="Lelaure V."/>
            <person name="Masuy D."/>
            <person name="Pohl T."/>
            <person name="Portetelle D."/>
            <person name="Puehler A."/>
            <person name="Purnelle B."/>
            <person name="Ramsperger U."/>
            <person name="Renard C."/>
            <person name="Thebault P."/>
            <person name="Vandenbol M."/>
            <person name="Weidner S."/>
            <person name="Galibert F."/>
        </authorList>
    </citation>
    <scope>NUCLEOTIDE SEQUENCE [LARGE SCALE GENOMIC DNA]</scope>
    <source>
        <strain>1021</strain>
    </source>
</reference>
<reference key="2">
    <citation type="journal article" date="2001" name="Science">
        <title>The composite genome of the legume symbiont Sinorhizobium meliloti.</title>
        <authorList>
            <person name="Galibert F."/>
            <person name="Finan T.M."/>
            <person name="Long S.R."/>
            <person name="Puehler A."/>
            <person name="Abola P."/>
            <person name="Ampe F."/>
            <person name="Barloy-Hubler F."/>
            <person name="Barnett M.J."/>
            <person name="Becker A."/>
            <person name="Boistard P."/>
            <person name="Bothe G."/>
            <person name="Boutry M."/>
            <person name="Bowser L."/>
            <person name="Buhrmester J."/>
            <person name="Cadieu E."/>
            <person name="Capela D."/>
            <person name="Chain P."/>
            <person name="Cowie A."/>
            <person name="Davis R.W."/>
            <person name="Dreano S."/>
            <person name="Federspiel N.A."/>
            <person name="Fisher R.F."/>
            <person name="Gloux S."/>
            <person name="Godrie T."/>
            <person name="Goffeau A."/>
            <person name="Golding B."/>
            <person name="Gouzy J."/>
            <person name="Gurjal M."/>
            <person name="Hernandez-Lucas I."/>
            <person name="Hong A."/>
            <person name="Huizar L."/>
            <person name="Hyman R.W."/>
            <person name="Jones T."/>
            <person name="Kahn D."/>
            <person name="Kahn M.L."/>
            <person name="Kalman S."/>
            <person name="Keating D.H."/>
            <person name="Kiss E."/>
            <person name="Komp C."/>
            <person name="Lelaure V."/>
            <person name="Masuy D."/>
            <person name="Palm C."/>
            <person name="Peck M.C."/>
            <person name="Pohl T.M."/>
            <person name="Portetelle D."/>
            <person name="Purnelle B."/>
            <person name="Ramsperger U."/>
            <person name="Surzycki R."/>
            <person name="Thebault P."/>
            <person name="Vandenbol M."/>
            <person name="Vorhoelter F.J."/>
            <person name="Weidner S."/>
            <person name="Wells D.H."/>
            <person name="Wong K."/>
            <person name="Yeh K.-C."/>
            <person name="Batut J."/>
        </authorList>
    </citation>
    <scope>NUCLEOTIDE SEQUENCE [LARGE SCALE GENOMIC DNA]</scope>
    <source>
        <strain>1021</strain>
    </source>
</reference>
<name>CUTC_RHIME</name>
<sequence>MSRISLEVCVDDPDGLEAAVAGGADRIELCSALGAGGLTPSPGLMAVAAPPPVPVYAMIRPRAGDFIYHRADLEVMRRDIDAARHAGLAGVVLGASLADGRLDARMLTKLAGHAAGMGLTLHRAFDLVPDFAEAMEIAVDLGFERILTSGGAKTAPEAVDTLERLIELSAGRISIMPGSGITSDTIEALVPRLAITEVHSSCSSAEPANDMRLVEMGFAAPERRRTDAAKIRAMRARLDAPAAKA</sequence>
<evidence type="ECO:0000255" key="1">
    <source>
        <dbReference type="HAMAP-Rule" id="MF_00795"/>
    </source>
</evidence>
<comment type="subcellular location">
    <subcellularLocation>
        <location evidence="1">Cytoplasm</location>
    </subcellularLocation>
</comment>
<comment type="similarity">
    <text evidence="1">Belongs to the CutC family.</text>
</comment>
<comment type="caution">
    <text evidence="1">Once thought to be involved in copper homeostasis, experiments in E.coli have shown this is not the case.</text>
</comment>
<feature type="chain" id="PRO_0000215073" description="PF03932 family protein CutC">
    <location>
        <begin position="1"/>
        <end position="245"/>
    </location>
</feature>
<protein>
    <recommendedName>
        <fullName evidence="1">PF03932 family protein CutC</fullName>
    </recommendedName>
</protein>
<organism>
    <name type="scientific">Rhizobium meliloti (strain 1021)</name>
    <name type="common">Ensifer meliloti</name>
    <name type="synonym">Sinorhizobium meliloti</name>
    <dbReference type="NCBI Taxonomy" id="266834"/>
    <lineage>
        <taxon>Bacteria</taxon>
        <taxon>Pseudomonadati</taxon>
        <taxon>Pseudomonadota</taxon>
        <taxon>Alphaproteobacteria</taxon>
        <taxon>Hyphomicrobiales</taxon>
        <taxon>Rhizobiaceae</taxon>
        <taxon>Sinorhizobium/Ensifer group</taxon>
        <taxon>Sinorhizobium</taxon>
    </lineage>
</organism>
<proteinExistence type="inferred from homology"/>
<gene>
    <name evidence="1" type="primary">cutC</name>
    <name type="ordered locus">R00204</name>
    <name type="ORF">SMc02879</name>
</gene>